<accession>A6SXP7</accession>
<sequence>MAVQQNKKTPSKRGMHRSHDFLVAPQLSVEPTTGETHMRHHISPNGFYRGRKVLKTKNDE</sequence>
<protein>
    <recommendedName>
        <fullName evidence="1">Large ribosomal subunit protein bL32</fullName>
    </recommendedName>
    <alternativeName>
        <fullName evidence="3">50S ribosomal protein L32</fullName>
    </alternativeName>
</protein>
<keyword id="KW-0687">Ribonucleoprotein</keyword>
<keyword id="KW-0689">Ribosomal protein</keyword>
<feature type="chain" id="PRO_1000005062" description="Large ribosomal subunit protein bL32">
    <location>
        <begin position="1"/>
        <end position="60"/>
    </location>
</feature>
<feature type="region of interest" description="Disordered" evidence="2">
    <location>
        <begin position="1"/>
        <end position="60"/>
    </location>
</feature>
<feature type="compositionally biased region" description="Basic residues" evidence="2">
    <location>
        <begin position="49"/>
        <end position="60"/>
    </location>
</feature>
<organism>
    <name type="scientific">Janthinobacterium sp. (strain Marseille)</name>
    <name type="common">Minibacterium massiliensis</name>
    <dbReference type="NCBI Taxonomy" id="375286"/>
    <lineage>
        <taxon>Bacteria</taxon>
        <taxon>Pseudomonadati</taxon>
        <taxon>Pseudomonadota</taxon>
        <taxon>Betaproteobacteria</taxon>
        <taxon>Burkholderiales</taxon>
        <taxon>Oxalobacteraceae</taxon>
        <taxon>Janthinobacterium</taxon>
    </lineage>
</organism>
<name>RL32_JANMA</name>
<proteinExistence type="inferred from homology"/>
<comment type="similarity">
    <text evidence="1">Belongs to the bacterial ribosomal protein bL32 family.</text>
</comment>
<gene>
    <name evidence="1" type="primary">rpmF</name>
    <name type="ordered locus">mma_1354</name>
</gene>
<dbReference type="EMBL" id="CP000269">
    <property type="protein sequence ID" value="ABR91652.1"/>
    <property type="molecule type" value="Genomic_DNA"/>
</dbReference>
<dbReference type="RefSeq" id="WP_012079211.1">
    <property type="nucleotide sequence ID" value="NC_009659.1"/>
</dbReference>
<dbReference type="SMR" id="A6SXP7"/>
<dbReference type="STRING" id="375286.mma_1354"/>
<dbReference type="KEGG" id="mms:mma_1354"/>
<dbReference type="eggNOG" id="COG0333">
    <property type="taxonomic scope" value="Bacteria"/>
</dbReference>
<dbReference type="HOGENOM" id="CLU_129084_2_1_4"/>
<dbReference type="OrthoDB" id="9801927at2"/>
<dbReference type="Proteomes" id="UP000006388">
    <property type="component" value="Chromosome"/>
</dbReference>
<dbReference type="GO" id="GO:0015934">
    <property type="term" value="C:large ribosomal subunit"/>
    <property type="evidence" value="ECO:0007669"/>
    <property type="project" value="InterPro"/>
</dbReference>
<dbReference type="GO" id="GO:0003735">
    <property type="term" value="F:structural constituent of ribosome"/>
    <property type="evidence" value="ECO:0007669"/>
    <property type="project" value="InterPro"/>
</dbReference>
<dbReference type="GO" id="GO:0006412">
    <property type="term" value="P:translation"/>
    <property type="evidence" value="ECO:0007669"/>
    <property type="project" value="UniProtKB-UniRule"/>
</dbReference>
<dbReference type="HAMAP" id="MF_00340">
    <property type="entry name" value="Ribosomal_bL32"/>
    <property type="match status" value="1"/>
</dbReference>
<dbReference type="InterPro" id="IPR002677">
    <property type="entry name" value="Ribosomal_bL32"/>
</dbReference>
<dbReference type="InterPro" id="IPR044957">
    <property type="entry name" value="Ribosomal_bL32_bact"/>
</dbReference>
<dbReference type="InterPro" id="IPR011332">
    <property type="entry name" value="Ribosomal_zn-bd"/>
</dbReference>
<dbReference type="NCBIfam" id="TIGR01031">
    <property type="entry name" value="rpmF_bact"/>
    <property type="match status" value="1"/>
</dbReference>
<dbReference type="PANTHER" id="PTHR35534">
    <property type="entry name" value="50S RIBOSOMAL PROTEIN L32"/>
    <property type="match status" value="1"/>
</dbReference>
<dbReference type="PANTHER" id="PTHR35534:SF1">
    <property type="entry name" value="LARGE RIBOSOMAL SUBUNIT PROTEIN BL32"/>
    <property type="match status" value="1"/>
</dbReference>
<dbReference type="Pfam" id="PF01783">
    <property type="entry name" value="Ribosomal_L32p"/>
    <property type="match status" value="1"/>
</dbReference>
<dbReference type="SUPFAM" id="SSF57829">
    <property type="entry name" value="Zn-binding ribosomal proteins"/>
    <property type="match status" value="1"/>
</dbReference>
<evidence type="ECO:0000255" key="1">
    <source>
        <dbReference type="HAMAP-Rule" id="MF_00340"/>
    </source>
</evidence>
<evidence type="ECO:0000256" key="2">
    <source>
        <dbReference type="SAM" id="MobiDB-lite"/>
    </source>
</evidence>
<evidence type="ECO:0000305" key="3"/>
<reference key="1">
    <citation type="journal article" date="2007" name="PLoS Genet.">
        <title>Genome analysis of Minibacterium massiliensis highlights the convergent evolution of water-living bacteria.</title>
        <authorList>
            <person name="Audic S."/>
            <person name="Robert C."/>
            <person name="Campagna B."/>
            <person name="Parinello H."/>
            <person name="Claverie J.-M."/>
            <person name="Raoult D."/>
            <person name="Drancourt M."/>
        </authorList>
    </citation>
    <scope>NUCLEOTIDE SEQUENCE [LARGE SCALE GENOMIC DNA]</scope>
    <source>
        <strain>Marseille</strain>
    </source>
</reference>